<comment type="function">
    <text evidence="1">Involved in the gluconeogenesis. Catalyzes stereospecifically the conversion of dihydroxyacetone phosphate (DHAP) to D-glyceraldehyde-3-phosphate (G3P).</text>
</comment>
<comment type="catalytic activity">
    <reaction evidence="1">
        <text>D-glyceraldehyde 3-phosphate = dihydroxyacetone phosphate</text>
        <dbReference type="Rhea" id="RHEA:18585"/>
        <dbReference type="ChEBI" id="CHEBI:57642"/>
        <dbReference type="ChEBI" id="CHEBI:59776"/>
        <dbReference type="EC" id="5.3.1.1"/>
    </reaction>
</comment>
<comment type="pathway">
    <text evidence="1">Carbohydrate biosynthesis; gluconeogenesis.</text>
</comment>
<comment type="pathway">
    <text evidence="1">Carbohydrate degradation; glycolysis; D-glyceraldehyde 3-phosphate from glycerone phosphate: step 1/1.</text>
</comment>
<comment type="subunit">
    <text evidence="1">Homodimer.</text>
</comment>
<comment type="subcellular location">
    <subcellularLocation>
        <location evidence="1">Cytoplasm</location>
    </subcellularLocation>
</comment>
<comment type="similarity">
    <text evidence="1">Belongs to the triosephosphate isomerase family.</text>
</comment>
<reference key="1">
    <citation type="journal article" date="2011" name="Appl. Environ. Microbiol.">
        <title>Genomic potential of Marinobacter aquaeolei, a biogeochemical 'opportunitroph'.</title>
        <authorList>
            <person name="Singer E."/>
            <person name="Webb E.A."/>
            <person name="Nelson W.C."/>
            <person name="Heidelberg J.F."/>
            <person name="Ivanova N."/>
            <person name="Pati A."/>
            <person name="Edwards K.J."/>
        </authorList>
    </citation>
    <scope>NUCLEOTIDE SEQUENCE [LARGE SCALE GENOMIC DNA]</scope>
    <source>
        <strain>ATCC 700491 / DSM 11845 / VT8</strain>
    </source>
</reference>
<dbReference type="EC" id="5.3.1.1" evidence="1"/>
<dbReference type="EMBL" id="CP000514">
    <property type="protein sequence ID" value="ABM20423.1"/>
    <property type="molecule type" value="Genomic_DNA"/>
</dbReference>
<dbReference type="RefSeq" id="WP_011786764.1">
    <property type="nucleotide sequence ID" value="NC_008740.1"/>
</dbReference>
<dbReference type="SMR" id="A1U604"/>
<dbReference type="STRING" id="351348.Maqu_3352"/>
<dbReference type="KEGG" id="maq:Maqu_3352"/>
<dbReference type="eggNOG" id="COG0149">
    <property type="taxonomic scope" value="Bacteria"/>
</dbReference>
<dbReference type="HOGENOM" id="CLU_024251_2_3_6"/>
<dbReference type="OrthoDB" id="9809429at2"/>
<dbReference type="UniPathway" id="UPA00109">
    <property type="reaction ID" value="UER00189"/>
</dbReference>
<dbReference type="UniPathway" id="UPA00138"/>
<dbReference type="Proteomes" id="UP000000998">
    <property type="component" value="Chromosome"/>
</dbReference>
<dbReference type="GO" id="GO:0005829">
    <property type="term" value="C:cytosol"/>
    <property type="evidence" value="ECO:0007669"/>
    <property type="project" value="TreeGrafter"/>
</dbReference>
<dbReference type="GO" id="GO:0004807">
    <property type="term" value="F:triose-phosphate isomerase activity"/>
    <property type="evidence" value="ECO:0007669"/>
    <property type="project" value="UniProtKB-UniRule"/>
</dbReference>
<dbReference type="GO" id="GO:0006094">
    <property type="term" value="P:gluconeogenesis"/>
    <property type="evidence" value="ECO:0007669"/>
    <property type="project" value="UniProtKB-UniRule"/>
</dbReference>
<dbReference type="GO" id="GO:0046166">
    <property type="term" value="P:glyceraldehyde-3-phosphate biosynthetic process"/>
    <property type="evidence" value="ECO:0007669"/>
    <property type="project" value="TreeGrafter"/>
</dbReference>
<dbReference type="GO" id="GO:0019563">
    <property type="term" value="P:glycerol catabolic process"/>
    <property type="evidence" value="ECO:0007669"/>
    <property type="project" value="TreeGrafter"/>
</dbReference>
<dbReference type="GO" id="GO:0006096">
    <property type="term" value="P:glycolytic process"/>
    <property type="evidence" value="ECO:0007669"/>
    <property type="project" value="UniProtKB-UniRule"/>
</dbReference>
<dbReference type="CDD" id="cd00311">
    <property type="entry name" value="TIM"/>
    <property type="match status" value="1"/>
</dbReference>
<dbReference type="FunFam" id="3.20.20.70:FF:000016">
    <property type="entry name" value="Triosephosphate isomerase"/>
    <property type="match status" value="1"/>
</dbReference>
<dbReference type="Gene3D" id="3.20.20.70">
    <property type="entry name" value="Aldolase class I"/>
    <property type="match status" value="1"/>
</dbReference>
<dbReference type="HAMAP" id="MF_00147_B">
    <property type="entry name" value="TIM_B"/>
    <property type="match status" value="1"/>
</dbReference>
<dbReference type="InterPro" id="IPR013785">
    <property type="entry name" value="Aldolase_TIM"/>
</dbReference>
<dbReference type="InterPro" id="IPR035990">
    <property type="entry name" value="TIM_sf"/>
</dbReference>
<dbReference type="InterPro" id="IPR022896">
    <property type="entry name" value="TrioseP_Isoase_bac/euk"/>
</dbReference>
<dbReference type="InterPro" id="IPR000652">
    <property type="entry name" value="Triosephosphate_isomerase"/>
</dbReference>
<dbReference type="InterPro" id="IPR020861">
    <property type="entry name" value="Triosephosphate_isomerase_AS"/>
</dbReference>
<dbReference type="NCBIfam" id="TIGR00419">
    <property type="entry name" value="tim"/>
    <property type="match status" value="1"/>
</dbReference>
<dbReference type="PANTHER" id="PTHR21139">
    <property type="entry name" value="TRIOSEPHOSPHATE ISOMERASE"/>
    <property type="match status" value="1"/>
</dbReference>
<dbReference type="PANTHER" id="PTHR21139:SF42">
    <property type="entry name" value="TRIOSEPHOSPHATE ISOMERASE"/>
    <property type="match status" value="1"/>
</dbReference>
<dbReference type="Pfam" id="PF00121">
    <property type="entry name" value="TIM"/>
    <property type="match status" value="1"/>
</dbReference>
<dbReference type="SUPFAM" id="SSF51351">
    <property type="entry name" value="Triosephosphate isomerase (TIM)"/>
    <property type="match status" value="1"/>
</dbReference>
<dbReference type="PROSITE" id="PS00171">
    <property type="entry name" value="TIM_1"/>
    <property type="match status" value="1"/>
</dbReference>
<dbReference type="PROSITE" id="PS51440">
    <property type="entry name" value="TIM_2"/>
    <property type="match status" value="1"/>
</dbReference>
<keyword id="KW-0963">Cytoplasm</keyword>
<keyword id="KW-0312">Gluconeogenesis</keyword>
<keyword id="KW-0324">Glycolysis</keyword>
<keyword id="KW-0413">Isomerase</keyword>
<name>TPIS_MARN8</name>
<organism>
    <name type="scientific">Marinobacter nauticus (strain ATCC 700491 / DSM 11845 / VT8)</name>
    <name type="common">Marinobacter aquaeolei</name>
    <dbReference type="NCBI Taxonomy" id="351348"/>
    <lineage>
        <taxon>Bacteria</taxon>
        <taxon>Pseudomonadati</taxon>
        <taxon>Pseudomonadota</taxon>
        <taxon>Gammaproteobacteria</taxon>
        <taxon>Pseudomonadales</taxon>
        <taxon>Marinobacteraceae</taxon>
        <taxon>Marinobacter</taxon>
    </lineage>
</organism>
<gene>
    <name evidence="1" type="primary">tpiA</name>
    <name type="ordered locus">Maqu_3352</name>
</gene>
<feature type="chain" id="PRO_0000307497" description="Triosephosphate isomerase">
    <location>
        <begin position="1"/>
        <end position="252"/>
    </location>
</feature>
<feature type="active site" description="Electrophile" evidence="1">
    <location>
        <position position="95"/>
    </location>
</feature>
<feature type="active site" description="Proton acceptor" evidence="1">
    <location>
        <position position="167"/>
    </location>
</feature>
<feature type="binding site" evidence="1">
    <location>
        <begin position="9"/>
        <end position="11"/>
    </location>
    <ligand>
        <name>substrate</name>
    </ligand>
</feature>
<feature type="binding site" evidence="1">
    <location>
        <position position="173"/>
    </location>
    <ligand>
        <name>substrate</name>
    </ligand>
</feature>
<feature type="binding site" evidence="1">
    <location>
        <position position="211"/>
    </location>
    <ligand>
        <name>substrate</name>
    </ligand>
</feature>
<feature type="binding site" evidence="1">
    <location>
        <begin position="232"/>
        <end position="233"/>
    </location>
    <ligand>
        <name>substrate</name>
    </ligand>
</feature>
<accession>A1U604</accession>
<protein>
    <recommendedName>
        <fullName evidence="1">Triosephosphate isomerase</fullName>
        <shortName evidence="1">TIM</shortName>
        <shortName evidence="1">TPI</shortName>
        <ecNumber evidence="1">5.3.1.1</ecNumber>
    </recommendedName>
    <alternativeName>
        <fullName evidence="1">Triose-phosphate isomerase</fullName>
    </alternativeName>
</protein>
<evidence type="ECO:0000255" key="1">
    <source>
        <dbReference type="HAMAP-Rule" id="MF_00147"/>
    </source>
</evidence>
<proteinExistence type="inferred from homology"/>
<sequence>MRRRIVAGNWKMNGSKDLVKQLVGAVREQSGSVGEDVEVVIIPPAIYLDQVAEQGGGRITTGAQNVSQWQSGAYTGEISAEMARDMGCGYVLVGHSERRQLFGETDSVAAAKVEQVLLSGLVAVLCVGETLAEREADQAEAVVAEQVRSGLSVVADGQWSRVVVAYEPVWAIGTGKTATADDAQAMHSEIRKVLDGMNAPANEISVLYGGSVKADNAAALFAEPDIDGGLIGGASLKAEEFISICRSFPAGV</sequence>